<feature type="chain" id="PRO_1000185064" description="Aromatic amino acid aminotransferase">
    <location>
        <begin position="1"/>
        <end position="353"/>
    </location>
</feature>
<feature type="modified residue" description="N6-(pyridoxal phosphate)lysine" evidence="1">
    <location>
        <position position="217"/>
    </location>
</feature>
<evidence type="ECO:0000255" key="1">
    <source>
        <dbReference type="HAMAP-Rule" id="MF_01513"/>
    </source>
</evidence>
<reference key="1">
    <citation type="journal article" date="2009" name="Vaccine">
        <title>Whole genome sequence analysis of Mycobacterium bovis bacillus Calmette-Guerin (BCG) Tokyo 172: a comparative study of BCG vaccine substrains.</title>
        <authorList>
            <person name="Seki M."/>
            <person name="Honda I."/>
            <person name="Fujita I."/>
            <person name="Yano I."/>
            <person name="Yamamoto S."/>
            <person name="Koyama A."/>
        </authorList>
    </citation>
    <scope>NUCLEOTIDE SEQUENCE [LARGE SCALE GENOMIC DNA]</scope>
    <source>
        <strain>BCG / Tokyo 172 / ATCC 35737 / TMC 1019</strain>
    </source>
</reference>
<sequence length="353" mass="38009">MTARLRPELAGLPVYVPGKTVPGAIKLASNETVFGPLPSVRAAIDRATDTVNRYPDNGCVQLKAALARHLGPDFAPEHVAVGCGSVSLCQQLVQVTASVGDEVVFGWRSFELYPPQVRVAGAIPIQVPLTDHTFDLYAMLAAVTDRTRLIFVCNPNNPTSTVVGPDALARFVEAVPAHILIAIDEAYVEYIRDGMRPDSLGLVRAHNNVVVLRTFSKAYGLAGLRIGYAIGHPDVITALDKVYVPFTVSSIGQAAAIASLDAADELLARTDTVVAERARVSAELRAAGFTLPPSQANFVWLPLGSRTQDFVEQAADARIVVRPYGTDGVRVTVAAPEENDAFLRFARRWRSDQ</sequence>
<gene>
    <name evidence="1" type="primary">pat</name>
    <name type="ordered locus">JTY_3835</name>
</gene>
<dbReference type="EC" id="2.6.1.57" evidence="1"/>
<dbReference type="EMBL" id="AP010918">
    <property type="protein sequence ID" value="BAH28105.1"/>
    <property type="molecule type" value="Genomic_DNA"/>
</dbReference>
<dbReference type="SMR" id="C1AIM6"/>
<dbReference type="KEGG" id="mbt:JTY_3835"/>
<dbReference type="HOGENOM" id="CLU_017584_3_3_11"/>
<dbReference type="GO" id="GO:0008793">
    <property type="term" value="F:aromatic-amino-acid transaminase activity"/>
    <property type="evidence" value="ECO:0007669"/>
    <property type="project" value="UniProtKB-UniRule"/>
</dbReference>
<dbReference type="GO" id="GO:0004400">
    <property type="term" value="F:histidinol-phosphate transaminase activity"/>
    <property type="evidence" value="ECO:0007669"/>
    <property type="project" value="InterPro"/>
</dbReference>
<dbReference type="GO" id="GO:0030170">
    <property type="term" value="F:pyridoxal phosphate binding"/>
    <property type="evidence" value="ECO:0007669"/>
    <property type="project" value="UniProtKB-UniRule"/>
</dbReference>
<dbReference type="GO" id="GO:0000105">
    <property type="term" value="P:L-histidine biosynthetic process"/>
    <property type="evidence" value="ECO:0007669"/>
    <property type="project" value="InterPro"/>
</dbReference>
<dbReference type="CDD" id="cd00609">
    <property type="entry name" value="AAT_like"/>
    <property type="match status" value="1"/>
</dbReference>
<dbReference type="Gene3D" id="3.90.1150.10">
    <property type="entry name" value="Aspartate Aminotransferase, domain 1"/>
    <property type="match status" value="1"/>
</dbReference>
<dbReference type="Gene3D" id="3.40.640.10">
    <property type="entry name" value="Type I PLP-dependent aspartate aminotransferase-like (Major domain)"/>
    <property type="match status" value="1"/>
</dbReference>
<dbReference type="HAMAP" id="MF_01023">
    <property type="entry name" value="HisC_aminotrans_2"/>
    <property type="match status" value="1"/>
</dbReference>
<dbReference type="HAMAP" id="MF_01513">
    <property type="entry name" value="Phe_aminotrans_2"/>
    <property type="match status" value="1"/>
</dbReference>
<dbReference type="InterPro" id="IPR001917">
    <property type="entry name" value="Aminotrans_II_pyridoxalP_BS"/>
</dbReference>
<dbReference type="InterPro" id="IPR004839">
    <property type="entry name" value="Aminotransferase_I/II_large"/>
</dbReference>
<dbReference type="InterPro" id="IPR024892">
    <property type="entry name" value="ArAT"/>
</dbReference>
<dbReference type="InterPro" id="IPR005861">
    <property type="entry name" value="HisP_aminotrans"/>
</dbReference>
<dbReference type="InterPro" id="IPR050106">
    <property type="entry name" value="HistidinolP_aminotransfase"/>
</dbReference>
<dbReference type="InterPro" id="IPR015424">
    <property type="entry name" value="PyrdxlP-dep_Trfase"/>
</dbReference>
<dbReference type="InterPro" id="IPR015421">
    <property type="entry name" value="PyrdxlP-dep_Trfase_major"/>
</dbReference>
<dbReference type="InterPro" id="IPR015422">
    <property type="entry name" value="PyrdxlP-dep_Trfase_small"/>
</dbReference>
<dbReference type="NCBIfam" id="NF002878">
    <property type="entry name" value="PRK03321.1"/>
    <property type="match status" value="1"/>
</dbReference>
<dbReference type="PANTHER" id="PTHR43643:SF3">
    <property type="entry name" value="HISTIDINOL-PHOSPHATE AMINOTRANSFERASE"/>
    <property type="match status" value="1"/>
</dbReference>
<dbReference type="PANTHER" id="PTHR43643">
    <property type="entry name" value="HISTIDINOL-PHOSPHATE AMINOTRANSFERASE 2"/>
    <property type="match status" value="1"/>
</dbReference>
<dbReference type="Pfam" id="PF00155">
    <property type="entry name" value="Aminotran_1_2"/>
    <property type="match status" value="1"/>
</dbReference>
<dbReference type="SUPFAM" id="SSF53383">
    <property type="entry name" value="PLP-dependent transferases"/>
    <property type="match status" value="1"/>
</dbReference>
<dbReference type="PROSITE" id="PS00599">
    <property type="entry name" value="AA_TRANSFER_CLASS_2"/>
    <property type="match status" value="1"/>
</dbReference>
<proteinExistence type="inferred from homology"/>
<comment type="function">
    <text evidence="1">Aminotransferase that catalyzes the conversion of aromatic amino acids and 2-oxoglutarate into corresponding aromatic oxo acids and L-glutamate.</text>
</comment>
<comment type="catalytic activity">
    <reaction evidence="1">
        <text>an aromatic L-alpha-amino acid + 2-oxoglutarate = an aromatic oxo-acid + L-glutamate</text>
        <dbReference type="Rhea" id="RHEA:17533"/>
        <dbReference type="ChEBI" id="CHEBI:16810"/>
        <dbReference type="ChEBI" id="CHEBI:29985"/>
        <dbReference type="ChEBI" id="CHEBI:73309"/>
        <dbReference type="ChEBI" id="CHEBI:84824"/>
        <dbReference type="EC" id="2.6.1.57"/>
    </reaction>
</comment>
<comment type="cofactor">
    <cofactor evidence="1">
        <name>pyridoxal 5'-phosphate</name>
        <dbReference type="ChEBI" id="CHEBI:597326"/>
    </cofactor>
</comment>
<comment type="subunit">
    <text evidence="1">Homodimer.</text>
</comment>
<comment type="similarity">
    <text evidence="1">Belongs to the class-II pyridoxal-phosphate-dependent aminotransferase family.</text>
</comment>
<accession>C1AIM6</accession>
<name>PATR_MYCBT</name>
<keyword id="KW-0032">Aminotransferase</keyword>
<keyword id="KW-0663">Pyridoxal phosphate</keyword>
<keyword id="KW-0808">Transferase</keyword>
<organism>
    <name type="scientific">Mycobacterium bovis (strain BCG / Tokyo 172 / ATCC 35737 / TMC 1019)</name>
    <dbReference type="NCBI Taxonomy" id="561275"/>
    <lineage>
        <taxon>Bacteria</taxon>
        <taxon>Bacillati</taxon>
        <taxon>Actinomycetota</taxon>
        <taxon>Actinomycetes</taxon>
        <taxon>Mycobacteriales</taxon>
        <taxon>Mycobacteriaceae</taxon>
        <taxon>Mycobacterium</taxon>
        <taxon>Mycobacterium tuberculosis complex</taxon>
    </lineage>
</organism>
<protein>
    <recommendedName>
        <fullName evidence="1">Aromatic amino acid aminotransferase</fullName>
        <shortName evidence="1">ArAT</shortName>
        <ecNumber evidence="1">2.6.1.57</ecNumber>
    </recommendedName>
</protein>